<keyword id="KW-0001">2Fe-2S</keyword>
<keyword id="KW-0249">Electron transport</keyword>
<keyword id="KW-0408">Iron</keyword>
<keyword id="KW-0411">Iron-sulfur</keyword>
<keyword id="KW-0472">Membrane</keyword>
<keyword id="KW-0479">Metal-binding</keyword>
<keyword id="KW-0560">Oxidoreductase</keyword>
<keyword id="KW-0812">Transmembrane</keyword>
<keyword id="KW-1133">Transmembrane helix</keyword>
<keyword id="KW-0813">Transport</keyword>
<name>CMAH_ASTRU</name>
<organism>
    <name type="scientific">Asterias rubens</name>
    <name type="common">Common European starfish</name>
    <name type="synonym">Asterias vulgaris</name>
    <dbReference type="NCBI Taxonomy" id="7604"/>
    <lineage>
        <taxon>Eukaryota</taxon>
        <taxon>Metazoa</taxon>
        <taxon>Echinodermata</taxon>
        <taxon>Eleutherozoa</taxon>
        <taxon>Asterozoa</taxon>
        <taxon>Asteroidea</taxon>
        <taxon>Forcipulatacea</taxon>
        <taxon>Forcipulatida</taxon>
        <taxon>Asteriidae</taxon>
        <taxon>Asterias</taxon>
    </lineage>
</organism>
<protein>
    <recommendedName>
        <fullName>Cytidine monophosphate-N-acetylneuraminic acid hydroxylase</fullName>
        <shortName>CMP-N-acetylneuraminic acid hydroxylase</shortName>
        <ecNumber>1.14.18.2</ecNumber>
    </recommendedName>
    <alternativeName>
        <fullName>CMP-N-acetylneuraminate monooxygenase</fullName>
    </alternativeName>
    <alternativeName>
        <fullName>CMP-Neu5Ac hydroxylase</fullName>
    </alternativeName>
    <alternativeName>
        <fullName>CMP-NeuAc hydroxylase</fullName>
    </alternativeName>
</protein>
<accession>Q95V11</accession>
<evidence type="ECO:0000255" key="1"/>
<evidence type="ECO:0000255" key="2">
    <source>
        <dbReference type="PROSITE-ProRule" id="PRU00628"/>
    </source>
</evidence>
<evidence type="ECO:0000256" key="3">
    <source>
        <dbReference type="SAM" id="MobiDB-lite"/>
    </source>
</evidence>
<evidence type="ECO:0000269" key="4">
    <source>
    </source>
</evidence>
<evidence type="ECO:0000269" key="5">
    <source>
    </source>
</evidence>
<evidence type="ECO:0000305" key="6"/>
<dbReference type="EC" id="1.14.18.2"/>
<dbReference type="EMBL" id="AJ308602">
    <property type="protein sequence ID" value="CAC67678.1"/>
    <property type="molecule type" value="mRNA"/>
</dbReference>
<dbReference type="SMR" id="Q95V11"/>
<dbReference type="OrthoDB" id="332863at2759"/>
<dbReference type="SABIO-RK" id="Q95V11"/>
<dbReference type="UniPathway" id="UPA00628"/>
<dbReference type="GO" id="GO:0005737">
    <property type="term" value="C:cytoplasm"/>
    <property type="evidence" value="ECO:0007669"/>
    <property type="project" value="TreeGrafter"/>
</dbReference>
<dbReference type="GO" id="GO:0016020">
    <property type="term" value="C:membrane"/>
    <property type="evidence" value="ECO:0007669"/>
    <property type="project" value="UniProtKB-SubCell"/>
</dbReference>
<dbReference type="GO" id="GO:0051537">
    <property type="term" value="F:2 iron, 2 sulfur cluster binding"/>
    <property type="evidence" value="ECO:0007669"/>
    <property type="project" value="UniProtKB-KW"/>
</dbReference>
<dbReference type="GO" id="GO:0030338">
    <property type="term" value="F:CMP-N-acetylneuraminate monooxygenase activity"/>
    <property type="evidence" value="ECO:0007669"/>
    <property type="project" value="UniProtKB-EC"/>
</dbReference>
<dbReference type="GO" id="GO:0046872">
    <property type="term" value="F:metal ion binding"/>
    <property type="evidence" value="ECO:0007669"/>
    <property type="project" value="UniProtKB-KW"/>
</dbReference>
<dbReference type="GO" id="GO:0046381">
    <property type="term" value="P:CMP-N-acetylneuraminate metabolic process"/>
    <property type="evidence" value="ECO:0007669"/>
    <property type="project" value="TreeGrafter"/>
</dbReference>
<dbReference type="GO" id="GO:0006054">
    <property type="term" value="P:N-acetylneuraminate metabolic process"/>
    <property type="evidence" value="ECO:0007669"/>
    <property type="project" value="UniProtKB-UniPathway"/>
</dbReference>
<dbReference type="CDD" id="cd03473">
    <property type="entry name" value="Rieske_CMP_Neu5Ac_hydrolase_N"/>
    <property type="match status" value="1"/>
</dbReference>
<dbReference type="Gene3D" id="3.60.15.10">
    <property type="entry name" value="Ribonuclease Z/Hydroxyacylglutathione hydrolase-like"/>
    <property type="match status" value="1"/>
</dbReference>
<dbReference type="Gene3D" id="2.102.10.10">
    <property type="entry name" value="Rieske [2Fe-2S] iron-sulphur domain"/>
    <property type="match status" value="1"/>
</dbReference>
<dbReference type="InterPro" id="IPR037339">
    <property type="entry name" value="CMP-Neu5Ac_hydroxylase_Rieske"/>
</dbReference>
<dbReference type="InterPro" id="IPR027033">
    <property type="entry name" value="Cnh"/>
</dbReference>
<dbReference type="InterPro" id="IPR036866">
    <property type="entry name" value="RibonucZ/Hydroxyglut_hydro"/>
</dbReference>
<dbReference type="InterPro" id="IPR017941">
    <property type="entry name" value="Rieske_2Fe-2S"/>
</dbReference>
<dbReference type="InterPro" id="IPR036922">
    <property type="entry name" value="Rieske_2Fe-2S_sf"/>
</dbReference>
<dbReference type="PANTHER" id="PTHR46522">
    <property type="entry name" value="CYTIDINE MONOPHOSPHATE-N-ACETYLNEURAMINIC ACID HYDROXYLASE"/>
    <property type="match status" value="1"/>
</dbReference>
<dbReference type="PANTHER" id="PTHR46522:SF1">
    <property type="entry name" value="INACTIVE CYTIDINE MONOPHOSPHATE-N-ACETYLNEURAMINIC ACID HYDROXYLASE"/>
    <property type="match status" value="1"/>
</dbReference>
<dbReference type="Pfam" id="PF13483">
    <property type="entry name" value="Lactamase_B_3"/>
    <property type="match status" value="1"/>
</dbReference>
<dbReference type="Pfam" id="PF00355">
    <property type="entry name" value="Rieske"/>
    <property type="match status" value="1"/>
</dbReference>
<dbReference type="SUPFAM" id="SSF50022">
    <property type="entry name" value="ISP domain"/>
    <property type="match status" value="1"/>
</dbReference>
<dbReference type="SUPFAM" id="SSF56281">
    <property type="entry name" value="Metallo-hydrolase/oxidoreductase"/>
    <property type="match status" value="1"/>
</dbReference>
<dbReference type="PROSITE" id="PS51296">
    <property type="entry name" value="RIESKE"/>
    <property type="match status" value="1"/>
</dbReference>
<gene>
    <name type="primary">cnh</name>
</gene>
<reference key="1">
    <citation type="journal article" date="2001" name="Eur. J. Biochem.">
        <title>Cloning and expression of a membrane-bound CMP-N-acetylneuraminic acid hydroxylase from the starfish Asterias rubens.</title>
        <authorList>
            <person name="Martensen I."/>
            <person name="Schauer R."/>
            <person name="Shaw L."/>
        </authorList>
    </citation>
    <scope>NUCLEOTIDE SEQUENCE [MRNA]</scope>
    <scope>FUNCTION</scope>
    <scope>ENZYME ACTIVITY</scope>
    <source>
        <tissue>Gonad</tissue>
    </source>
</reference>
<reference key="2">
    <citation type="journal article" date="2003" name="Comp. Biochem. Physiol.">
        <title>Isolation and characterization of cytidine-5'-monophosphate-N-acetylneuraminate hydroxylase from the starfish Asterias rubens.</title>
        <authorList>
            <person name="Gollub M."/>
            <person name="Shaw L."/>
        </authorList>
    </citation>
    <scope>BIOPHYSICOCHEMICAL PROPERTIES</scope>
</reference>
<feature type="chain" id="PRO_0000127807" description="Cytidine monophosphate-N-acetylneuraminic acid hydroxylase">
    <location>
        <begin position="1"/>
        <end position="653"/>
    </location>
</feature>
<feature type="transmembrane region" description="Helical" evidence="1">
    <location>
        <begin position="630"/>
        <end position="647"/>
    </location>
</feature>
<feature type="domain" description="Rieske" evidence="2">
    <location>
        <begin position="11"/>
        <end position="120"/>
    </location>
</feature>
<feature type="region of interest" description="Disordered" evidence="3">
    <location>
        <begin position="596"/>
        <end position="622"/>
    </location>
</feature>
<feature type="compositionally biased region" description="Basic and acidic residues" evidence="3">
    <location>
        <begin position="606"/>
        <end position="618"/>
    </location>
</feature>
<feature type="binding site" evidence="2">
    <location>
        <position position="62"/>
    </location>
    <ligand>
        <name>[2Fe-2S] cluster</name>
        <dbReference type="ChEBI" id="CHEBI:190135"/>
    </ligand>
</feature>
<feature type="binding site" evidence="2">
    <location>
        <position position="64"/>
    </location>
    <ligand>
        <name>[2Fe-2S] cluster</name>
        <dbReference type="ChEBI" id="CHEBI:190135"/>
    </ligand>
</feature>
<feature type="binding site" evidence="2">
    <location>
        <position position="83"/>
    </location>
    <ligand>
        <name>[2Fe-2S] cluster</name>
        <dbReference type="ChEBI" id="CHEBI:190135"/>
    </ligand>
</feature>
<feature type="binding site" evidence="2">
    <location>
        <position position="86"/>
    </location>
    <ligand>
        <name>[2Fe-2S] cluster</name>
        <dbReference type="ChEBI" id="CHEBI:190135"/>
    </ligand>
</feature>
<comment type="function">
    <text evidence="4">Sialic acids are components of carbohydrate chains of glycoconjugates and are involved in cell-cell recognition and cell-pathogen interactions. Catalyzes the conversion of CMP-N-acetylneuraminic acid (CMP-Neu5Ac) into its hydroxylated derivative CMP-N-glycolylneuraminic acid (CMP-Neu5Gc), a sialic acid abundantly expressed at the surface of many cells.</text>
</comment>
<comment type="catalytic activity">
    <reaction evidence="4">
        <text>CMP-N-acetyl-beta-neuraminate + 2 Fe(II)-[cytochrome b5] + O2 + 2 H(+) = CMP-N-glycoloyl-beta-neuraminate + 2 Fe(III)-[cytochrome b5] + H2O</text>
        <dbReference type="Rhea" id="RHEA:16145"/>
        <dbReference type="Rhea" id="RHEA-COMP:10438"/>
        <dbReference type="Rhea" id="RHEA-COMP:10439"/>
        <dbReference type="ChEBI" id="CHEBI:15377"/>
        <dbReference type="ChEBI" id="CHEBI:15378"/>
        <dbReference type="ChEBI" id="CHEBI:15379"/>
        <dbReference type="ChEBI" id="CHEBI:29033"/>
        <dbReference type="ChEBI" id="CHEBI:29034"/>
        <dbReference type="ChEBI" id="CHEBI:57812"/>
        <dbReference type="ChEBI" id="CHEBI:58376"/>
        <dbReference type="EC" id="1.14.18.2"/>
    </reaction>
</comment>
<comment type="cofactor">
    <cofactor evidence="2">
        <name>[2Fe-2S] cluster</name>
        <dbReference type="ChEBI" id="CHEBI:190135"/>
    </cofactor>
    <text evidence="2">Binds 1 [2Fe-2S] cluster per subunit.</text>
</comment>
<comment type="biophysicochemical properties">
    <kinetics>
        <KM evidence="5">0.94 uM for cytochrome b5</KM>
        <KM evidence="5">9.76 uM for CMP-Neu5Ac</KM>
        <Vmax evidence="5">58.7 pmol/min/mg enzyme with cytochrome b5 as substrate</Vmax>
        <Vmax evidence="5">9.76 pmol/min/mg enzyme with CMP-Neu5Ac as substrate</Vmax>
        <text>Decreased enzyme activity in presence of 100 mM of NaCl.</text>
    </kinetics>
</comment>
<comment type="pathway">
    <text>Amino-sugar metabolism; N-acetylneuraminate metabolism.</text>
</comment>
<comment type="subcellular location">
    <subcellularLocation>
        <location evidence="6">Membrane</location>
        <topology evidence="6">Single-pass membrane protein</topology>
    </subcellularLocation>
</comment>
<comment type="similarity">
    <text evidence="6">Belongs to the CMP-Neu5Ac hydroxylase family.</text>
</comment>
<proteinExistence type="evidence at protein level"/>
<sequence length="653" mass="75336">MEQEREIVFSLSPEETSELKNGVNLISRSEKEKFVIYKDPTAENTVEEPATSHMYKACLNKCKHQGGTFIKDIEDGDNCILRCTKHGWKLDAKTMRYVNPPDSFSQQQLVPEYNEDGSLDIVELKPPQPWETDKRDPMPLEVGEVQITYFTHACIEIKLGDLIMFTDPWLIGPAFARGWWLMHEPPADWLDRLAKADLIYISHLHSDHLNYPTLELLSQRNPDIPIYVGDTSMPVFVRLEQSGVKLNNIHIKKFGKWIEINKDTRFMIMMDGVHPDMDTCALIDYKGHLILDTVDCTNPNGGRLPIGVDMMLSDFAGGASGFPMTFSGGKYTEEWKAEFVKRERRKLLYYKMQQVRDVAPTVYCPFAGYFVEAHPSDHYIRSTNTKNDPDALNALINKYSPNIKTWSPSPGAVLDLKKAIQGDRDFITDPPRGTQKFKDSWDFEKYVNAINKNIEEEIFSYPEWIQFYYKWTGFKNYNLVIRMVERDDDFCPVVGGYDFMVDFVGEEPTFPTERPAREHSYLEMENRIGVHRETVRQGLFWDDLYIGFNNRISREPDTFHYLFWNHMQILLPRTDPDWEGFLRDMKTEGAPQKAIWNPSQATPAVEAKDPSSDSKDSATKPGTHWNYERLLRPLGIVVALVGVGVAIWKSESK</sequence>